<gene>
    <name evidence="5" type="primary">egc1</name>
    <name evidence="8" type="ORF">CDV57_02266</name>
</gene>
<proteinExistence type="evidence at protein level"/>
<keyword id="KW-0326">Glycosidase</keyword>
<keyword id="KW-0378">Hydrolase</keyword>
<keyword id="KW-0472">Membrane</keyword>
<reference evidence="7" key="1">
    <citation type="journal article" date="2012" name="J. Biol. Chem.">
        <title>Quality control of fungus-specific glucosylceramide in Cryptococcus neoformans by endoglycoceramidase-related protein 1 (EGCrP1).</title>
        <authorList>
            <person name="Ishibashi Y."/>
            <person name="Ikeda K."/>
            <person name="Sakaguchi K."/>
            <person name="Okino N."/>
            <person name="Taguchi R."/>
            <person name="Ito M."/>
        </authorList>
    </citation>
    <scope>NUCLEOTIDE SEQUENCE [MRNA]</scope>
    <scope>FUNCTION</scope>
    <scope>CATALYTIC ACTIVITY</scope>
    <source>
        <strain evidence="7">NBRC 33022</strain>
    </source>
</reference>
<reference key="2">
    <citation type="journal article" date="2020" name="J. Antimicrob. Chemother.">
        <title>Prevalence and mechanisms of azole resistance in clinical isolates of Aspergillus section Fumigati species in a Canadian tertiary care centre, 2000 to 2013.</title>
        <authorList>
            <person name="Parent-Michaud M."/>
            <person name="Dufresne P.J."/>
            <person name="Fournier E."/>
            <person name="Folch B."/>
            <person name="Martineau C."/>
            <person name="Moreira S."/>
            <person name="Doucet N."/>
            <person name="De Repentigny L."/>
            <person name="Dufresne S.F."/>
        </authorList>
    </citation>
    <scope>NUCLEOTIDE SEQUENCE [LARGE SCALE GENOMIC DNA]</scope>
    <source>
        <strain>HMR AF 270</strain>
    </source>
</reference>
<protein>
    <recommendedName>
        <fullName evidence="5">Glucosylceramidase</fullName>
        <ecNumber evidence="4">3.2.1.45</ecNumber>
    </recommendedName>
    <alternativeName>
        <fullName evidence="5">Endoglycoceramidase-related protein 1</fullName>
        <shortName evidence="5">EGCrP1</shortName>
    </alternativeName>
</protein>
<accession>H1AE13</accession>
<sequence>MGVLRLRVDGQTFRDPDNREITLRGINVAGEAKYPKKPDIPSYVSDGFFDADNVSFVGRPFSLDDAHTHFSRLRKWGYNTIRYVFTWEAIEHEGPGKYDDEWISFTIEVLRIAKQYGFYVFLDPHQDVWSRLSGGSGAPAWTLYAAGFDPRGFKKTEAALVQNTFDDPAEFPKMIWSTNYTRLVSQTMFTLFYGGRDFAPKAIIDGINIQDYLQGHFIAACRYFAQKIHEAGDIENEVVIGWESMNEPNRGLIGVQDISVIPPEQQLQLGTSPTAFQGMLTGSGRACEESTWAFGGFGPYQTGRELVDPEGETAWLPADYDDTRYGWVRDPGWKLGECLWAQHGVWDPSSDKLLRKDYFAKNPQTGEPLNYDKFTNTYFMEHYRAYRDALRSVWPEAIIFCQPPVMEVPPDLKGTVDDDPNMVHAVHYYDGITLLTKHWNRLYNVDVIGVLRGKYLTPAFAVKIGETAIRNCLRDQLKFLRDESLRYMGTHPLIFTEIGIPFDMDDRHAYKTGDYSGQVSAMDANHFAIEGSTANGFTLWLYTTSNNHEWGDNWNGEDLSIYSVDDLELPSGKLLAFENESQRDPQSPAYSESQRNTESYRVGPRDLKQALQAPSISSEISQSSQDKLGFRAAEAWVRPSPIITNGQILQYGFDLKSCVFSMRLLGEKKGLGQEAATEIFLPDFHFPDTHTVVAVSAGEWTIDYPEIHSVKFQRLRWWHPEGDHNIKIQGVKRKPGDPTVSGEELSYLEQCQGGGCSVM</sequence>
<comment type="function">
    <text evidence="1 4">Specifically hydrolyzes the glucosidic linkage in glucosylceramide (PubMed:22072709). May prevent accumulation of aberrent glucosylceramide containing immature ceramide (By similarity).</text>
</comment>
<comment type="catalytic activity">
    <reaction evidence="4">
        <text>a beta-D-glucosyl-(1&lt;-&gt;1')-N-acylsphing-4-enine + H2O = an N-acylsphing-4-enine + D-glucose</text>
        <dbReference type="Rhea" id="RHEA:13269"/>
        <dbReference type="ChEBI" id="CHEBI:4167"/>
        <dbReference type="ChEBI" id="CHEBI:15377"/>
        <dbReference type="ChEBI" id="CHEBI:22801"/>
        <dbReference type="ChEBI" id="CHEBI:52639"/>
        <dbReference type="EC" id="3.2.1.45"/>
    </reaction>
    <physiologicalReaction direction="left-to-right" evidence="4">
        <dbReference type="Rhea" id="RHEA:13270"/>
    </physiologicalReaction>
</comment>
<comment type="subcellular location">
    <subcellularLocation>
        <location evidence="6">Membrane</location>
        <topology evidence="6">Peripheral membrane protein</topology>
    </subcellularLocation>
</comment>
<comment type="similarity">
    <text evidence="6">Belongs to the glycosyl hydrolase 5 (cellulase A) family.</text>
</comment>
<evidence type="ECO:0000250" key="1">
    <source>
        <dbReference type="UniProtKB" id="H1AE12"/>
    </source>
</evidence>
<evidence type="ECO:0000250" key="2">
    <source>
        <dbReference type="UniProtKB" id="O85465"/>
    </source>
</evidence>
<evidence type="ECO:0000256" key="3">
    <source>
        <dbReference type="SAM" id="MobiDB-lite"/>
    </source>
</evidence>
<evidence type="ECO:0000269" key="4">
    <source>
    </source>
</evidence>
<evidence type="ECO:0000303" key="5">
    <source>
    </source>
</evidence>
<evidence type="ECO:0000305" key="6"/>
<evidence type="ECO:0000312" key="7">
    <source>
        <dbReference type="EMBL" id="BAL46041.1"/>
    </source>
</evidence>
<evidence type="ECO:0000312" key="8">
    <source>
        <dbReference type="EMBL" id="OXN27561.1"/>
    </source>
</evidence>
<feature type="chain" id="PRO_0000451754" description="Glucosylceramidase">
    <location>
        <begin position="1"/>
        <end position="759"/>
    </location>
</feature>
<feature type="region of interest" description="Disordered" evidence="3">
    <location>
        <begin position="576"/>
        <end position="600"/>
    </location>
</feature>
<feature type="compositionally biased region" description="Polar residues" evidence="3">
    <location>
        <begin position="584"/>
        <end position="599"/>
    </location>
</feature>
<feature type="active site" description="Proton donor" evidence="2">
    <location>
        <position position="247"/>
    </location>
</feature>
<feature type="active site" description="Nucleophile" evidence="2">
    <location>
        <position position="497"/>
    </location>
</feature>
<name>EGCR1_ASPFM</name>
<dbReference type="EC" id="3.2.1.45" evidence="4"/>
<dbReference type="EMBL" id="AB669901">
    <property type="protein sequence ID" value="BAL46041.1"/>
    <property type="molecule type" value="mRNA"/>
</dbReference>
<dbReference type="EMBL" id="NKHT01000047">
    <property type="protein sequence ID" value="OXN27561.1"/>
    <property type="molecule type" value="Genomic_DNA"/>
</dbReference>
<dbReference type="SMR" id="H1AE13"/>
<dbReference type="OMA" id="AACRYFA"/>
<dbReference type="GO" id="GO:0005829">
    <property type="term" value="C:cytosol"/>
    <property type="evidence" value="ECO:0007669"/>
    <property type="project" value="EnsemblFungi"/>
</dbReference>
<dbReference type="GO" id="GO:0016020">
    <property type="term" value="C:membrane"/>
    <property type="evidence" value="ECO:0007669"/>
    <property type="project" value="UniProtKB-SubCell"/>
</dbReference>
<dbReference type="GO" id="GO:0004348">
    <property type="term" value="F:glucosylceramidase activity"/>
    <property type="evidence" value="ECO:0007669"/>
    <property type="project" value="UniProtKB-EC"/>
</dbReference>
<dbReference type="GO" id="GO:0050295">
    <property type="term" value="F:steryl-beta-glucosidase activity"/>
    <property type="evidence" value="ECO:0007669"/>
    <property type="project" value="EnsemblFungi"/>
</dbReference>
<dbReference type="GO" id="GO:1904462">
    <property type="term" value="P:ergosteryl 3-beta-D-glucoside catabolic process"/>
    <property type="evidence" value="ECO:0007669"/>
    <property type="project" value="EnsemblFungi"/>
</dbReference>
<dbReference type="GO" id="GO:0000272">
    <property type="term" value="P:polysaccharide catabolic process"/>
    <property type="evidence" value="ECO:0007669"/>
    <property type="project" value="InterPro"/>
</dbReference>
<dbReference type="FunFam" id="3.20.20.80:FF:000131">
    <property type="entry name" value="Glycoside hydrolase superfamily"/>
    <property type="match status" value="1"/>
</dbReference>
<dbReference type="FunFam" id="3.20.20.80:FF:000106">
    <property type="entry name" value="Glycosyl hydrolase, putative"/>
    <property type="match status" value="1"/>
</dbReference>
<dbReference type="FunFam" id="2.60.40.1180:FF:000052">
    <property type="entry name" value="Uncharacterized glycosyl hydrolase YIR007W"/>
    <property type="match status" value="1"/>
</dbReference>
<dbReference type="Gene3D" id="3.20.20.80">
    <property type="entry name" value="Glycosidases"/>
    <property type="match status" value="2"/>
</dbReference>
<dbReference type="Gene3D" id="2.60.40.1180">
    <property type="entry name" value="Golgi alpha-mannosidase II"/>
    <property type="match status" value="1"/>
</dbReference>
<dbReference type="InterPro" id="IPR041036">
    <property type="entry name" value="GH5_C"/>
</dbReference>
<dbReference type="InterPro" id="IPR001547">
    <property type="entry name" value="Glyco_hydro_5"/>
</dbReference>
<dbReference type="InterPro" id="IPR018087">
    <property type="entry name" value="Glyco_hydro_5_CS"/>
</dbReference>
<dbReference type="InterPro" id="IPR013780">
    <property type="entry name" value="Glyco_hydro_b"/>
</dbReference>
<dbReference type="InterPro" id="IPR017853">
    <property type="entry name" value="Glycoside_hydrolase_SF"/>
</dbReference>
<dbReference type="InterPro" id="IPR052066">
    <property type="entry name" value="Glycosphingolipid_Hydrolases"/>
</dbReference>
<dbReference type="PANTHER" id="PTHR31308">
    <property type="match status" value="1"/>
</dbReference>
<dbReference type="PANTHER" id="PTHR31308:SF5">
    <property type="entry name" value="ERGOSTERYL-BETA-GLUCOSIDASE"/>
    <property type="match status" value="1"/>
</dbReference>
<dbReference type="Pfam" id="PF00150">
    <property type="entry name" value="Cellulase"/>
    <property type="match status" value="1"/>
</dbReference>
<dbReference type="Pfam" id="PF18564">
    <property type="entry name" value="Glyco_hydro_5_C"/>
    <property type="match status" value="1"/>
</dbReference>
<dbReference type="SUPFAM" id="SSF51445">
    <property type="entry name" value="(Trans)glycosidases"/>
    <property type="match status" value="1"/>
</dbReference>
<dbReference type="PROSITE" id="PS00659">
    <property type="entry name" value="GLYCOSYL_HYDROL_F5"/>
    <property type="match status" value="1"/>
</dbReference>
<organism evidence="7">
    <name type="scientific">Aspergillus fumigatus</name>
    <name type="common">Neosartorya fumigata</name>
    <dbReference type="NCBI Taxonomy" id="746128"/>
    <lineage>
        <taxon>Eukaryota</taxon>
        <taxon>Fungi</taxon>
        <taxon>Dikarya</taxon>
        <taxon>Ascomycota</taxon>
        <taxon>Pezizomycotina</taxon>
        <taxon>Eurotiomycetes</taxon>
        <taxon>Eurotiomycetidae</taxon>
        <taxon>Eurotiales</taxon>
        <taxon>Aspergillaceae</taxon>
        <taxon>Aspergillus</taxon>
        <taxon>Aspergillus subgen. Fumigati</taxon>
    </lineage>
</organism>